<organism>
    <name type="scientific">Kluyveromyces lactis (strain ATCC 8585 / CBS 2359 / DSM 70799 / NBRC 1267 / NRRL Y-1140 / WM37)</name>
    <name type="common">Yeast</name>
    <name type="synonym">Candida sphaerica</name>
    <dbReference type="NCBI Taxonomy" id="284590"/>
    <lineage>
        <taxon>Eukaryota</taxon>
        <taxon>Fungi</taxon>
        <taxon>Dikarya</taxon>
        <taxon>Ascomycota</taxon>
        <taxon>Saccharomycotina</taxon>
        <taxon>Saccharomycetes</taxon>
        <taxon>Saccharomycetales</taxon>
        <taxon>Saccharomycetaceae</taxon>
        <taxon>Kluyveromyces</taxon>
    </lineage>
</organism>
<accession>Q6CWJ7</accession>
<protein>
    <recommendedName>
        <fullName>DNA-directed RNA polymerase III subunit RPC3</fullName>
        <shortName>RNA polymerase III subunit C3</shortName>
    </recommendedName>
</protein>
<reference key="1">
    <citation type="journal article" date="2004" name="Nature">
        <title>Genome evolution in yeasts.</title>
        <authorList>
            <person name="Dujon B."/>
            <person name="Sherman D."/>
            <person name="Fischer G."/>
            <person name="Durrens P."/>
            <person name="Casaregola S."/>
            <person name="Lafontaine I."/>
            <person name="de Montigny J."/>
            <person name="Marck C."/>
            <person name="Neuveglise C."/>
            <person name="Talla E."/>
            <person name="Goffard N."/>
            <person name="Frangeul L."/>
            <person name="Aigle M."/>
            <person name="Anthouard V."/>
            <person name="Babour A."/>
            <person name="Barbe V."/>
            <person name="Barnay S."/>
            <person name="Blanchin S."/>
            <person name="Beckerich J.-M."/>
            <person name="Beyne E."/>
            <person name="Bleykasten C."/>
            <person name="Boisrame A."/>
            <person name="Boyer J."/>
            <person name="Cattolico L."/>
            <person name="Confanioleri F."/>
            <person name="de Daruvar A."/>
            <person name="Despons L."/>
            <person name="Fabre E."/>
            <person name="Fairhead C."/>
            <person name="Ferry-Dumazet H."/>
            <person name="Groppi A."/>
            <person name="Hantraye F."/>
            <person name="Hennequin C."/>
            <person name="Jauniaux N."/>
            <person name="Joyet P."/>
            <person name="Kachouri R."/>
            <person name="Kerrest A."/>
            <person name="Koszul R."/>
            <person name="Lemaire M."/>
            <person name="Lesur I."/>
            <person name="Ma L."/>
            <person name="Muller H."/>
            <person name="Nicaud J.-M."/>
            <person name="Nikolski M."/>
            <person name="Oztas S."/>
            <person name="Ozier-Kalogeropoulos O."/>
            <person name="Pellenz S."/>
            <person name="Potier S."/>
            <person name="Richard G.-F."/>
            <person name="Straub M.-L."/>
            <person name="Suleau A."/>
            <person name="Swennen D."/>
            <person name="Tekaia F."/>
            <person name="Wesolowski-Louvel M."/>
            <person name="Westhof E."/>
            <person name="Wirth B."/>
            <person name="Zeniou-Meyer M."/>
            <person name="Zivanovic Y."/>
            <person name="Bolotin-Fukuhara M."/>
            <person name="Thierry A."/>
            <person name="Bouchier C."/>
            <person name="Caudron B."/>
            <person name="Scarpelli C."/>
            <person name="Gaillardin C."/>
            <person name="Weissenbach J."/>
            <person name="Wincker P."/>
            <person name="Souciet J.-L."/>
        </authorList>
    </citation>
    <scope>NUCLEOTIDE SEQUENCE [LARGE SCALE GENOMIC DNA]</scope>
    <source>
        <strain>ATCC 8585 / CBS 2359 / DSM 70799 / NBRC 1267 / NRRL Y-1140 / WM37</strain>
    </source>
</reference>
<name>RPC3_KLULA</name>
<comment type="function">
    <text evidence="1">DNA-dependent RNA polymerase catalyzes the transcription of DNA into RNA using the four ribonucleoside triphosphates as substrates. Specific core component of RNA polymerase III which synthesizes small RNAs, such as 5S rRNA and tRNAs (By similarity).</text>
</comment>
<comment type="subunit">
    <text evidence="1">Component of the RNA polymerase III (Pol III) complex consisting of 17 subunits.</text>
</comment>
<comment type="subcellular location">
    <subcellularLocation>
        <location evidence="1">Nucleus</location>
    </subcellularLocation>
</comment>
<comment type="similarity">
    <text evidence="3">Belongs to the RNA polymerase beta chain family.</text>
</comment>
<sequence>MSAAQAALIPDAAVPNGGASVVSAAEPSTSTSPEPIDISSLEQRTLNPDSFLYSELARSHLGERASTVLSVLVNKGRLSTREIHSFIPELSLSSIKTVLVSLIQLRCVQYLEETSLSGRKTLYYYFNEEGLFLMLYAGDISDRIVQYFNQDEEQHLVNIAQQIIHNVLALGSLTVKDYLASESNSNDTDIFNIHQAFVRLADLEFLVPLQGIHYTPIVDLWNMLYLREYKKLPKNTTQSDLKKRNEAKAKAKLEFNRIVSSPSQDSNGKIFLTDSGTGFKKVNESVSLTFNLERYLKSRRSNQLVQFAKSRIGTTSSKIYAVALSMTEQHSNGLSHPLSKTGLFQDLDERTSLEEDLKLDEENVKGVSFTALDVARRLPSNLDLRGTLVHSNQSLKRKQKHNQSPPQFEKRIKTEDGFVVPPLPTVMEESEEENEEGDANLDLDEDDSDPRSVSLVNGHLRLLLTANIPFIKESKPGQFFVPYSSLIPILKSSTYDSIIASTLGPSSHRVLRCIRDNGLCTERTITTTSLMREKDVRTVIGTLVKYNAIEIQEVPRTVDRAASRAVFLFRIKEKHAFNTMKLNLTWNLARLISKLETLKEENATLLKKANRDDVKGREMELLLASEINQLKVVNDRELNGLVRRHRLLSLWEVFKLF</sequence>
<dbReference type="EMBL" id="CR382122">
    <property type="protein sequence ID" value="CAH02085.1"/>
    <property type="molecule type" value="Genomic_DNA"/>
</dbReference>
<dbReference type="RefSeq" id="XP_451692.1">
    <property type="nucleotide sequence ID" value="XM_451692.1"/>
</dbReference>
<dbReference type="SMR" id="Q6CWJ7"/>
<dbReference type="FunCoup" id="Q6CWJ7">
    <property type="interactions" value="541"/>
</dbReference>
<dbReference type="STRING" id="284590.Q6CWJ7"/>
<dbReference type="PaxDb" id="284590-Q6CWJ7"/>
<dbReference type="KEGG" id="kla:KLLA0_B03542g"/>
<dbReference type="eggNOG" id="KOG2587">
    <property type="taxonomic scope" value="Eukaryota"/>
</dbReference>
<dbReference type="HOGENOM" id="CLU_010734_0_0_1"/>
<dbReference type="InParanoid" id="Q6CWJ7"/>
<dbReference type="OMA" id="KHRFVRH"/>
<dbReference type="Proteomes" id="UP000000598">
    <property type="component" value="Chromosome B"/>
</dbReference>
<dbReference type="GO" id="GO:0005666">
    <property type="term" value="C:RNA polymerase III complex"/>
    <property type="evidence" value="ECO:0007669"/>
    <property type="project" value="InterPro"/>
</dbReference>
<dbReference type="GO" id="GO:0003697">
    <property type="term" value="F:single-stranded DNA binding"/>
    <property type="evidence" value="ECO:0007669"/>
    <property type="project" value="InterPro"/>
</dbReference>
<dbReference type="GO" id="GO:0006351">
    <property type="term" value="P:DNA-templated transcription"/>
    <property type="evidence" value="ECO:0007669"/>
    <property type="project" value="InterPro"/>
</dbReference>
<dbReference type="Gene3D" id="1.10.10.10">
    <property type="entry name" value="Winged helix-like DNA-binding domain superfamily/Winged helix DNA-binding domain"/>
    <property type="match status" value="2"/>
</dbReference>
<dbReference type="InterPro" id="IPR055207">
    <property type="entry name" value="POLR3C_WHD"/>
</dbReference>
<dbReference type="InterPro" id="IPR013197">
    <property type="entry name" value="RNA_pol_III_RPC82-rel_HTH"/>
</dbReference>
<dbReference type="InterPro" id="IPR008806">
    <property type="entry name" value="RNA_pol_III_Rpc82_C"/>
</dbReference>
<dbReference type="InterPro" id="IPR039748">
    <property type="entry name" value="RPC3"/>
</dbReference>
<dbReference type="InterPro" id="IPR036388">
    <property type="entry name" value="WH-like_DNA-bd_sf"/>
</dbReference>
<dbReference type="InterPro" id="IPR036390">
    <property type="entry name" value="WH_DNA-bd_sf"/>
</dbReference>
<dbReference type="PANTHER" id="PTHR12949:SF0">
    <property type="entry name" value="DNA-DIRECTED RNA POLYMERASE III SUBUNIT RPC3"/>
    <property type="match status" value="1"/>
</dbReference>
<dbReference type="PANTHER" id="PTHR12949">
    <property type="entry name" value="RNA POLYMERASE III DNA DIRECTED -RELATED"/>
    <property type="match status" value="1"/>
</dbReference>
<dbReference type="Pfam" id="PF08221">
    <property type="entry name" value="HTH_9"/>
    <property type="match status" value="1"/>
</dbReference>
<dbReference type="Pfam" id="PF22536">
    <property type="entry name" value="POLR3C_WHD"/>
    <property type="match status" value="1"/>
</dbReference>
<dbReference type="Pfam" id="PF05645">
    <property type="entry name" value="RNA_pol_Rpc82"/>
    <property type="match status" value="1"/>
</dbReference>
<dbReference type="Pfam" id="PF20912">
    <property type="entry name" value="RPC3_helical"/>
    <property type="match status" value="1"/>
</dbReference>
<dbReference type="SUPFAM" id="SSF46785">
    <property type="entry name" value="Winged helix' DNA-binding domain"/>
    <property type="match status" value="1"/>
</dbReference>
<evidence type="ECO:0000250" key="1"/>
<evidence type="ECO:0000256" key="2">
    <source>
        <dbReference type="SAM" id="MobiDB-lite"/>
    </source>
</evidence>
<evidence type="ECO:0000305" key="3"/>
<keyword id="KW-0240">DNA-directed RNA polymerase</keyword>
<keyword id="KW-0539">Nucleus</keyword>
<keyword id="KW-1185">Reference proteome</keyword>
<keyword id="KW-0804">Transcription</keyword>
<keyword id="KW-0862">Zinc</keyword>
<proteinExistence type="inferred from homology"/>
<gene>
    <name type="primary">RPC82</name>
    <name type="synonym">RPC3</name>
    <name type="ordered locus">KLLA0B03542g</name>
</gene>
<feature type="chain" id="PRO_0000351035" description="DNA-directed RNA polymerase III subunit RPC3">
    <location>
        <begin position="1"/>
        <end position="657"/>
    </location>
</feature>
<feature type="region of interest" description="Disordered" evidence="2">
    <location>
        <begin position="390"/>
        <end position="450"/>
    </location>
</feature>
<feature type="region of interest" description="Leucine-zipper">
    <location>
        <begin position="584"/>
        <end position="605"/>
    </location>
</feature>
<feature type="compositionally biased region" description="Acidic residues" evidence="2">
    <location>
        <begin position="428"/>
        <end position="448"/>
    </location>
</feature>